<keyword id="KW-0963">Cytoplasm</keyword>
<keyword id="KW-0570">Pentose shunt</keyword>
<keyword id="KW-1185">Reference proteome</keyword>
<keyword id="KW-0704">Schiff base</keyword>
<keyword id="KW-0808">Transferase</keyword>
<gene>
    <name evidence="2" type="primary">tal</name>
    <name type="synonym">talB</name>
    <name type="ordered locus">HI_1125</name>
</gene>
<evidence type="ECO:0000250" key="1"/>
<evidence type="ECO:0000255" key="2">
    <source>
        <dbReference type="HAMAP-Rule" id="MF_00492"/>
    </source>
</evidence>
<evidence type="ECO:0000305" key="3"/>
<accession>P45055</accession>
<protein>
    <recommendedName>
        <fullName evidence="2">Transaldolase</fullName>
        <ecNumber evidence="2">2.2.1.2</ecNumber>
    </recommendedName>
</protein>
<sequence length="317" mass="34905">MTTQLDSLRNMTVVVADTGDIDAIKKYQPQDATTNPSLILSASALPQYAPLIDEAVAYAKAQSADKAQQLIDAEDKLAVNIGLEILKIVPGRISTEVDARLSYDTQATVEKARKLIALYNAAGISNDRILIKIASTWQGIRAAEILEKEGINCNLTLLFSEAQARACAEAGVYLISPFVGRILDWYKANSDKKEYAPAEDPGVISVTKIYNYYKEYGYNTVVMGASFRNVGEITELAGCDRLTIAPALLKELQENSTALVRKLEYKGEVKAKPQPLTEAEFYWQHNSDAMAVEKLAEGIRKFAIDQEKLETMLSAKL</sequence>
<organism>
    <name type="scientific">Haemophilus influenzae (strain ATCC 51907 / DSM 11121 / KW20 / Rd)</name>
    <dbReference type="NCBI Taxonomy" id="71421"/>
    <lineage>
        <taxon>Bacteria</taxon>
        <taxon>Pseudomonadati</taxon>
        <taxon>Pseudomonadota</taxon>
        <taxon>Gammaproteobacteria</taxon>
        <taxon>Pasteurellales</taxon>
        <taxon>Pasteurellaceae</taxon>
        <taxon>Haemophilus</taxon>
    </lineage>
</organism>
<proteinExistence type="inferred from homology"/>
<reference key="1">
    <citation type="journal article" date="1995" name="Science">
        <title>Whole-genome random sequencing and assembly of Haemophilus influenzae Rd.</title>
        <authorList>
            <person name="Fleischmann R.D."/>
            <person name="Adams M.D."/>
            <person name="White O."/>
            <person name="Clayton R.A."/>
            <person name="Kirkness E.F."/>
            <person name="Kerlavage A.R."/>
            <person name="Bult C.J."/>
            <person name="Tomb J.-F."/>
            <person name="Dougherty B.A."/>
            <person name="Merrick J.M."/>
            <person name="McKenney K."/>
            <person name="Sutton G.G."/>
            <person name="FitzHugh W."/>
            <person name="Fields C.A."/>
            <person name="Gocayne J.D."/>
            <person name="Scott J.D."/>
            <person name="Shirley R."/>
            <person name="Liu L.-I."/>
            <person name="Glodek A."/>
            <person name="Kelley J.M."/>
            <person name="Weidman J.F."/>
            <person name="Phillips C.A."/>
            <person name="Spriggs T."/>
            <person name="Hedblom E."/>
            <person name="Cotton M.D."/>
            <person name="Utterback T.R."/>
            <person name="Hanna M.C."/>
            <person name="Nguyen D.T."/>
            <person name="Saudek D.M."/>
            <person name="Brandon R.C."/>
            <person name="Fine L.D."/>
            <person name="Fritchman J.L."/>
            <person name="Fuhrmann J.L."/>
            <person name="Geoghagen N.S.M."/>
            <person name="Gnehm C.L."/>
            <person name="McDonald L.A."/>
            <person name="Small K.V."/>
            <person name="Fraser C.M."/>
            <person name="Smith H.O."/>
            <person name="Venter J.C."/>
        </authorList>
    </citation>
    <scope>NUCLEOTIDE SEQUENCE [LARGE SCALE GENOMIC DNA]</scope>
    <source>
        <strain>ATCC 51907 / DSM 11121 / KW20 / Rd</strain>
    </source>
</reference>
<feature type="initiator methionine" description="Removed" evidence="1">
    <location>
        <position position="1"/>
    </location>
</feature>
<feature type="chain" id="PRO_0000173599" description="Transaldolase">
    <location>
        <begin position="2"/>
        <end position="317"/>
    </location>
</feature>
<feature type="active site" description="Schiff-base intermediate with substrate" evidence="2">
    <location>
        <position position="132"/>
    </location>
</feature>
<name>TAL_HAEIN</name>
<dbReference type="EC" id="2.2.1.2" evidence="2"/>
<dbReference type="EMBL" id="L42023">
    <property type="protein sequence ID" value="AAC22779.1"/>
    <property type="molecule type" value="Genomic_DNA"/>
</dbReference>
<dbReference type="PIR" id="D64167">
    <property type="entry name" value="D64167"/>
</dbReference>
<dbReference type="RefSeq" id="NP_439282.1">
    <property type="nucleotide sequence ID" value="NC_000907.1"/>
</dbReference>
<dbReference type="SMR" id="P45055"/>
<dbReference type="STRING" id="71421.HI_1125"/>
<dbReference type="EnsemblBacteria" id="AAC22779">
    <property type="protein sequence ID" value="AAC22779"/>
    <property type="gene ID" value="HI_1125"/>
</dbReference>
<dbReference type="KEGG" id="hin:HI_1125"/>
<dbReference type="PATRIC" id="fig|71421.8.peg.1174"/>
<dbReference type="eggNOG" id="COG0176">
    <property type="taxonomic scope" value="Bacteria"/>
</dbReference>
<dbReference type="HOGENOM" id="CLU_047470_0_1_6"/>
<dbReference type="OrthoDB" id="9809101at2"/>
<dbReference type="PhylomeDB" id="P45055"/>
<dbReference type="BioCyc" id="HINF71421:G1GJ1-1160-MONOMER"/>
<dbReference type="UniPathway" id="UPA00115">
    <property type="reaction ID" value="UER00414"/>
</dbReference>
<dbReference type="Proteomes" id="UP000000579">
    <property type="component" value="Chromosome"/>
</dbReference>
<dbReference type="GO" id="GO:0005829">
    <property type="term" value="C:cytosol"/>
    <property type="evidence" value="ECO:0000318"/>
    <property type="project" value="GO_Central"/>
</dbReference>
<dbReference type="GO" id="GO:0004801">
    <property type="term" value="F:transaldolase activity"/>
    <property type="evidence" value="ECO:0000250"/>
    <property type="project" value="UniProtKB"/>
</dbReference>
<dbReference type="GO" id="GO:0005975">
    <property type="term" value="P:carbohydrate metabolic process"/>
    <property type="evidence" value="ECO:0007669"/>
    <property type="project" value="InterPro"/>
</dbReference>
<dbReference type="GO" id="GO:0009052">
    <property type="term" value="P:pentose-phosphate shunt, non-oxidative branch"/>
    <property type="evidence" value="ECO:0000318"/>
    <property type="project" value="GO_Central"/>
</dbReference>
<dbReference type="CDD" id="cd00957">
    <property type="entry name" value="Transaldolase_TalAB"/>
    <property type="match status" value="1"/>
</dbReference>
<dbReference type="FunFam" id="3.20.20.70:FF:000002">
    <property type="entry name" value="Transaldolase"/>
    <property type="match status" value="1"/>
</dbReference>
<dbReference type="Gene3D" id="3.20.20.70">
    <property type="entry name" value="Aldolase class I"/>
    <property type="match status" value="1"/>
</dbReference>
<dbReference type="HAMAP" id="MF_00492">
    <property type="entry name" value="Transaldolase_1"/>
    <property type="match status" value="1"/>
</dbReference>
<dbReference type="InterPro" id="IPR013785">
    <property type="entry name" value="Aldolase_TIM"/>
</dbReference>
<dbReference type="InterPro" id="IPR001585">
    <property type="entry name" value="TAL/FSA"/>
</dbReference>
<dbReference type="InterPro" id="IPR004730">
    <property type="entry name" value="Transaldolase_1"/>
</dbReference>
<dbReference type="InterPro" id="IPR018225">
    <property type="entry name" value="Transaldolase_AS"/>
</dbReference>
<dbReference type="NCBIfam" id="NF009001">
    <property type="entry name" value="PRK12346.1"/>
    <property type="match status" value="1"/>
</dbReference>
<dbReference type="NCBIfam" id="TIGR00874">
    <property type="entry name" value="talAB"/>
    <property type="match status" value="1"/>
</dbReference>
<dbReference type="PANTHER" id="PTHR10683">
    <property type="entry name" value="TRANSALDOLASE"/>
    <property type="match status" value="1"/>
</dbReference>
<dbReference type="PANTHER" id="PTHR10683:SF18">
    <property type="entry name" value="TRANSALDOLASE"/>
    <property type="match status" value="1"/>
</dbReference>
<dbReference type="Pfam" id="PF00923">
    <property type="entry name" value="TAL_FSA"/>
    <property type="match status" value="1"/>
</dbReference>
<dbReference type="SUPFAM" id="SSF51569">
    <property type="entry name" value="Aldolase"/>
    <property type="match status" value="1"/>
</dbReference>
<dbReference type="PROSITE" id="PS01054">
    <property type="entry name" value="TRANSALDOLASE_1"/>
    <property type="match status" value="1"/>
</dbReference>
<dbReference type="PROSITE" id="PS00958">
    <property type="entry name" value="TRANSALDOLASE_2"/>
    <property type="match status" value="1"/>
</dbReference>
<comment type="function">
    <text evidence="2">Transaldolase is important for the balance of metabolites in the pentose-phosphate pathway.</text>
</comment>
<comment type="catalytic activity">
    <reaction evidence="2">
        <text>D-sedoheptulose 7-phosphate + D-glyceraldehyde 3-phosphate = D-erythrose 4-phosphate + beta-D-fructose 6-phosphate</text>
        <dbReference type="Rhea" id="RHEA:17053"/>
        <dbReference type="ChEBI" id="CHEBI:16897"/>
        <dbReference type="ChEBI" id="CHEBI:57483"/>
        <dbReference type="ChEBI" id="CHEBI:57634"/>
        <dbReference type="ChEBI" id="CHEBI:59776"/>
        <dbReference type="EC" id="2.2.1.2"/>
    </reaction>
</comment>
<comment type="pathway">
    <text evidence="2">Carbohydrate degradation; pentose phosphate pathway; D-glyceraldehyde 3-phosphate and beta-D-fructose 6-phosphate from D-ribose 5-phosphate and D-xylulose 5-phosphate (non-oxidative stage): step 2/3.</text>
</comment>
<comment type="subcellular location">
    <subcellularLocation>
        <location evidence="2">Cytoplasm</location>
    </subcellularLocation>
</comment>
<comment type="similarity">
    <text evidence="2 3">Belongs to the transaldolase family. Type 1 subfamily.</text>
</comment>